<dbReference type="EMBL" id="CR858973">
    <property type="protein sequence ID" value="CAH91168.1"/>
    <property type="molecule type" value="mRNA"/>
</dbReference>
<dbReference type="RefSeq" id="NP_001125684.1">
    <property type="nucleotide sequence ID" value="NM_001132212.1"/>
</dbReference>
<dbReference type="SMR" id="Q5RAP2"/>
<dbReference type="FunCoup" id="Q5RAP2">
    <property type="interactions" value="286"/>
</dbReference>
<dbReference type="STRING" id="9601.ENSPPYP00000024315"/>
<dbReference type="GlyCosmos" id="Q5RAP2">
    <property type="glycosylation" value="1 site, No reported glycans"/>
</dbReference>
<dbReference type="GeneID" id="100172605"/>
<dbReference type="KEGG" id="pon:100172605"/>
<dbReference type="CTD" id="8910"/>
<dbReference type="eggNOG" id="KOG4482">
    <property type="taxonomic scope" value="Eukaryota"/>
</dbReference>
<dbReference type="InParanoid" id="Q5RAP2"/>
<dbReference type="OrthoDB" id="10019906at2759"/>
<dbReference type="Proteomes" id="UP000001595">
    <property type="component" value="Unplaced"/>
</dbReference>
<dbReference type="GO" id="GO:0005856">
    <property type="term" value="C:cytoskeleton"/>
    <property type="evidence" value="ECO:0007669"/>
    <property type="project" value="UniProtKB-SubCell"/>
</dbReference>
<dbReference type="GO" id="GO:0032590">
    <property type="term" value="C:dendrite membrane"/>
    <property type="evidence" value="ECO:0000250"/>
    <property type="project" value="UniProtKB"/>
</dbReference>
<dbReference type="GO" id="GO:0005794">
    <property type="term" value="C:Golgi apparatus"/>
    <property type="evidence" value="ECO:0000250"/>
    <property type="project" value="UniProtKB"/>
</dbReference>
<dbReference type="GO" id="GO:0005886">
    <property type="term" value="C:plasma membrane"/>
    <property type="evidence" value="ECO:0000250"/>
    <property type="project" value="UniProtKB"/>
</dbReference>
<dbReference type="GO" id="GO:0016012">
    <property type="term" value="C:sarcoglycan complex"/>
    <property type="evidence" value="ECO:0007669"/>
    <property type="project" value="InterPro"/>
</dbReference>
<dbReference type="GO" id="GO:0042383">
    <property type="term" value="C:sarcolemma"/>
    <property type="evidence" value="ECO:0007669"/>
    <property type="project" value="UniProtKB-SubCell"/>
</dbReference>
<dbReference type="InterPro" id="IPR006644">
    <property type="entry name" value="Cadg"/>
</dbReference>
<dbReference type="InterPro" id="IPR008908">
    <property type="entry name" value="Sarcoglycan_alpha/epsilon"/>
</dbReference>
<dbReference type="InterPro" id="IPR048347">
    <property type="entry name" value="Sarcoglycan_C"/>
</dbReference>
<dbReference type="InterPro" id="IPR048346">
    <property type="entry name" value="Sarcoglycan_N"/>
</dbReference>
<dbReference type="PANTHER" id="PTHR10132">
    <property type="entry name" value="ALPHA-/EPSILON-SARCOGLYCAN FAMILY MEMBER"/>
    <property type="match status" value="1"/>
</dbReference>
<dbReference type="PANTHER" id="PTHR10132:SF17">
    <property type="entry name" value="EPSILON-SARCOGLYCAN"/>
    <property type="match status" value="1"/>
</dbReference>
<dbReference type="Pfam" id="PF05510">
    <property type="entry name" value="Sarcoglycan_2"/>
    <property type="match status" value="1"/>
</dbReference>
<dbReference type="Pfam" id="PF20989">
    <property type="entry name" value="Sarcoglycan_2_C"/>
    <property type="match status" value="1"/>
</dbReference>
<dbReference type="SMART" id="SM00736">
    <property type="entry name" value="CADG"/>
    <property type="match status" value="1"/>
</dbReference>
<comment type="function">
    <text evidence="2">Component of the sarcoglycan complex, a subcomplex of the dystrophin-glycoprotein complex which forms a link between the F-actin cytoskeleton and the extracellular matrix.</text>
</comment>
<comment type="subcellular location">
    <subcellularLocation>
        <location evidence="1">Cell membrane</location>
        <location evidence="1">Sarcolemma</location>
        <topology evidence="1">Single-pass membrane protein</topology>
    </subcellularLocation>
    <subcellularLocation>
        <location evidence="3">Cytoplasm</location>
        <location evidence="3">Cytoskeleton</location>
    </subcellularLocation>
    <subcellularLocation>
        <location evidence="1">Cell projection</location>
        <location evidence="1">Dendrite</location>
    </subcellularLocation>
    <subcellularLocation>
        <location evidence="1">Golgi apparatus</location>
    </subcellularLocation>
</comment>
<comment type="PTM">
    <text evidence="1">N-glycosylated.</text>
</comment>
<comment type="PTM">
    <text evidence="1">Ubiquitinated, leading to its degradation by the proteasome.</text>
</comment>
<comment type="similarity">
    <text evidence="4">Belongs to the sarcoglycan alpha/epsilon family.</text>
</comment>
<protein>
    <recommendedName>
        <fullName evidence="2">Epsilon-sarcoglycan</fullName>
        <shortName evidence="2">Epsilon-SG</shortName>
    </recommendedName>
</protein>
<name>SGCE_PONAB</name>
<feature type="chain" id="PRO_0000378623" description="Epsilon-sarcoglycan">
    <location>
        <begin position="1"/>
        <end position="437"/>
    </location>
</feature>
<feature type="topological domain" description="Extracellular" evidence="2 4">
    <location>
        <begin position="1"/>
        <end position="317"/>
    </location>
</feature>
<feature type="transmembrane region" description="Helical" evidence="4">
    <location>
        <begin position="318"/>
        <end position="338"/>
    </location>
</feature>
<feature type="topological domain" description="Cytoplasmic" evidence="2 4">
    <location>
        <begin position="339"/>
        <end position="437"/>
    </location>
</feature>
<feature type="glycosylation site" description="N-linked (GlcNAc...) asparagine" evidence="4">
    <location>
        <position position="200"/>
    </location>
</feature>
<sequence length="437" mass="49855">MQLPRWWELGDPCAWTGQGRGTRRMSPATTGTFLLTVYSIFSKVHSDRNVYPSAGVLFVHVLEREYFKGEFPPYPKPGEISNDPITFNTNLMGYPDRPGWLRYIQRTPYSDGVLYGSPTAENVGKPTIIEITAYNRRTFETARHNLIINVMSAEDFPLPYQAEFFIKNMNVEEMLASEVLGDFLGAVKNVWQPERLNAINITSALDRGGRVPLPINDLKEGVYVMVGADVPFSSCLREVENPQNQLRCSQEMEPVITCDKKFRTQFYIDWCKISLVDKTKQVSTYQEVIRGEGILPDGGEYKPPSDSLKSRDYYTDFLITLAVPSAVALVLFLILAYIMCCRREGVEKRNMQTPDIQLVHHSAIQKSTKELRDMSKNREIAWPLSTLPVFHPVTGEMIPPLHTDNYDSTNMPLMQTQQNLPHQTQIPQQQTTGKWYP</sequence>
<gene>
    <name evidence="2" type="primary">SGCE</name>
</gene>
<reference evidence="5" key="1">
    <citation type="submission" date="2004-11" db="EMBL/GenBank/DDBJ databases">
        <authorList>
            <consortium name="The German cDNA Consortium"/>
        </authorList>
    </citation>
    <scope>NUCLEOTIDE SEQUENCE [LARGE SCALE MRNA]</scope>
    <source>
        <tissue evidence="5">Kidney</tissue>
    </source>
</reference>
<evidence type="ECO:0000250" key="1"/>
<evidence type="ECO:0000250" key="2">
    <source>
        <dbReference type="UniProtKB" id="O43556"/>
    </source>
</evidence>
<evidence type="ECO:0000250" key="3">
    <source>
        <dbReference type="UniProtKB" id="P82350"/>
    </source>
</evidence>
<evidence type="ECO:0000255" key="4"/>
<evidence type="ECO:0000312" key="5">
    <source>
        <dbReference type="EMBL" id="CAH91168.1"/>
    </source>
</evidence>
<keyword id="KW-1003">Cell membrane</keyword>
<keyword id="KW-0966">Cell projection</keyword>
<keyword id="KW-0963">Cytoplasm</keyword>
<keyword id="KW-0206">Cytoskeleton</keyword>
<keyword id="KW-0325">Glycoprotein</keyword>
<keyword id="KW-0333">Golgi apparatus</keyword>
<keyword id="KW-0472">Membrane</keyword>
<keyword id="KW-1185">Reference proteome</keyword>
<keyword id="KW-0812">Transmembrane</keyword>
<keyword id="KW-1133">Transmembrane helix</keyword>
<keyword id="KW-0832">Ubl conjugation</keyword>
<proteinExistence type="evidence at transcript level"/>
<accession>Q5RAP2</accession>
<organism>
    <name type="scientific">Pongo abelii</name>
    <name type="common">Sumatran orangutan</name>
    <name type="synonym">Pongo pygmaeus abelii</name>
    <dbReference type="NCBI Taxonomy" id="9601"/>
    <lineage>
        <taxon>Eukaryota</taxon>
        <taxon>Metazoa</taxon>
        <taxon>Chordata</taxon>
        <taxon>Craniata</taxon>
        <taxon>Vertebrata</taxon>
        <taxon>Euteleostomi</taxon>
        <taxon>Mammalia</taxon>
        <taxon>Eutheria</taxon>
        <taxon>Euarchontoglires</taxon>
        <taxon>Primates</taxon>
        <taxon>Haplorrhini</taxon>
        <taxon>Catarrhini</taxon>
        <taxon>Hominidae</taxon>
        <taxon>Pongo</taxon>
    </lineage>
</organism>